<proteinExistence type="inferred from homology"/>
<reference key="1">
    <citation type="journal article" date="2007" name="Proc. Natl. Acad. Sci. U.S.A.">
        <title>Genome plasticity of BCG and impact on vaccine efficacy.</title>
        <authorList>
            <person name="Brosch R."/>
            <person name="Gordon S.V."/>
            <person name="Garnier T."/>
            <person name="Eiglmeier K."/>
            <person name="Frigui W."/>
            <person name="Valenti P."/>
            <person name="Dos Santos S."/>
            <person name="Duthoy S."/>
            <person name="Lacroix C."/>
            <person name="Garcia-Pelayo C."/>
            <person name="Inwald J.K."/>
            <person name="Golby P."/>
            <person name="Garcia J.N."/>
            <person name="Hewinson R.G."/>
            <person name="Behr M.A."/>
            <person name="Quail M.A."/>
            <person name="Churcher C."/>
            <person name="Barrell B.G."/>
            <person name="Parkhill J."/>
            <person name="Cole S.T."/>
        </authorList>
    </citation>
    <scope>NUCLEOTIDE SEQUENCE [LARGE SCALE GENOMIC DNA]</scope>
    <source>
        <strain>BCG / Pasteur 1173P2</strain>
    </source>
</reference>
<sequence length="379" mass="39769">MTISDVPTQTLPAEGEIGLIDVGSLQLESGAVIDDVCIAVQRWGKLSPARDNVVVVLHALTGDSHITGPAGPGHPTPGWWDGVAGPGAPIDTTRWCAVATNVLGGCRGSTGPSSLARDGKPWGSRFPLISIRDQVQADVAALAALGITEVAAVVGGSMGGARALEWVVGYPDRVRAGLLLAVGARATADQIGTQTTQIAAIKADPDWQSGDYHETGRAPDAGLRLARRFAHLTYRGEIELDTRFANHNQGNEDPTAGGRYAVQSYLEHQGDKLLSRFDAGSYVILTEALNSHDVGRGRGGVSAALRACPVPVVVGGITSDRLYPLRLQQELADLLPGCAGLRVVESVYGHDGFLVETEAVGELIRQTLGLADREGACRR</sequence>
<evidence type="ECO:0000255" key="1">
    <source>
        <dbReference type="HAMAP-Rule" id="MF_00296"/>
    </source>
</evidence>
<feature type="chain" id="PRO_1000021884" description="Homoserine O-acetyltransferase">
    <location>
        <begin position="1"/>
        <end position="379"/>
    </location>
</feature>
<feature type="domain" description="AB hydrolase-1" evidence="1">
    <location>
        <begin position="52"/>
        <end position="356"/>
    </location>
</feature>
<feature type="active site" description="Nucleophile" evidence="1">
    <location>
        <position position="157"/>
    </location>
</feature>
<feature type="active site" evidence="1">
    <location>
        <position position="320"/>
    </location>
</feature>
<feature type="active site" evidence="1">
    <location>
        <position position="350"/>
    </location>
</feature>
<feature type="binding site" evidence="1">
    <location>
        <position position="227"/>
    </location>
    <ligand>
        <name>substrate</name>
    </ligand>
</feature>
<feature type="binding site" evidence="1">
    <location>
        <position position="351"/>
    </location>
    <ligand>
        <name>substrate</name>
    </ligand>
</feature>
<gene>
    <name evidence="1" type="primary">metXA</name>
    <name type="ordered locus">BCG_3411</name>
</gene>
<comment type="function">
    <text evidence="1">Transfers an acetyl group from acetyl-CoA to L-homoserine, forming acetyl-L-homoserine.</text>
</comment>
<comment type="catalytic activity">
    <reaction evidence="1">
        <text>L-homoserine + acetyl-CoA = O-acetyl-L-homoserine + CoA</text>
        <dbReference type="Rhea" id="RHEA:13701"/>
        <dbReference type="ChEBI" id="CHEBI:57287"/>
        <dbReference type="ChEBI" id="CHEBI:57288"/>
        <dbReference type="ChEBI" id="CHEBI:57476"/>
        <dbReference type="ChEBI" id="CHEBI:57716"/>
        <dbReference type="EC" id="2.3.1.31"/>
    </reaction>
</comment>
<comment type="pathway">
    <text evidence="1">Amino-acid biosynthesis; L-methionine biosynthesis via de novo pathway; O-acetyl-L-homoserine from L-homoserine: step 1/1.</text>
</comment>
<comment type="subunit">
    <text evidence="1">Homodimer.</text>
</comment>
<comment type="subcellular location">
    <subcellularLocation>
        <location evidence="1">Cytoplasm</location>
    </subcellularLocation>
</comment>
<comment type="similarity">
    <text evidence="1">Belongs to the AB hydrolase superfamily. MetX family.</text>
</comment>
<organism>
    <name type="scientific">Mycobacterium bovis (strain BCG / Pasteur 1173P2)</name>
    <dbReference type="NCBI Taxonomy" id="410289"/>
    <lineage>
        <taxon>Bacteria</taxon>
        <taxon>Bacillati</taxon>
        <taxon>Actinomycetota</taxon>
        <taxon>Actinomycetes</taxon>
        <taxon>Mycobacteriales</taxon>
        <taxon>Mycobacteriaceae</taxon>
        <taxon>Mycobacterium</taxon>
        <taxon>Mycobacterium tuberculosis complex</taxon>
    </lineage>
</organism>
<dbReference type="EC" id="2.3.1.31" evidence="1"/>
<dbReference type="EMBL" id="AM408590">
    <property type="protein sequence ID" value="CAL73400.1"/>
    <property type="molecule type" value="Genomic_DNA"/>
</dbReference>
<dbReference type="SMR" id="A1KP32"/>
<dbReference type="ESTHER" id="myctu-metx">
    <property type="family name" value="Homoserine_transacetylase"/>
</dbReference>
<dbReference type="KEGG" id="mbb:BCG_3411"/>
<dbReference type="HOGENOM" id="CLU_028760_1_0_11"/>
<dbReference type="UniPathway" id="UPA00051">
    <property type="reaction ID" value="UER00074"/>
</dbReference>
<dbReference type="Proteomes" id="UP000001472">
    <property type="component" value="Chromosome"/>
</dbReference>
<dbReference type="GO" id="GO:0005737">
    <property type="term" value="C:cytoplasm"/>
    <property type="evidence" value="ECO:0007669"/>
    <property type="project" value="UniProtKB-SubCell"/>
</dbReference>
<dbReference type="GO" id="GO:0004414">
    <property type="term" value="F:homoserine O-acetyltransferase activity"/>
    <property type="evidence" value="ECO:0007669"/>
    <property type="project" value="UniProtKB-UniRule"/>
</dbReference>
<dbReference type="GO" id="GO:0009092">
    <property type="term" value="P:homoserine metabolic process"/>
    <property type="evidence" value="ECO:0007669"/>
    <property type="project" value="TreeGrafter"/>
</dbReference>
<dbReference type="GO" id="GO:0009086">
    <property type="term" value="P:methionine biosynthetic process"/>
    <property type="evidence" value="ECO:0007669"/>
    <property type="project" value="UniProtKB-UniRule"/>
</dbReference>
<dbReference type="FunFam" id="3.40.50.1820:FF:000324">
    <property type="entry name" value="Homoserine O-acetyltransferase"/>
    <property type="match status" value="1"/>
</dbReference>
<dbReference type="Gene3D" id="3.40.50.1820">
    <property type="entry name" value="alpha/beta hydrolase"/>
    <property type="match status" value="1"/>
</dbReference>
<dbReference type="HAMAP" id="MF_00296">
    <property type="entry name" value="MetX_acyltransf"/>
    <property type="match status" value="1"/>
</dbReference>
<dbReference type="InterPro" id="IPR000073">
    <property type="entry name" value="AB_hydrolase_1"/>
</dbReference>
<dbReference type="InterPro" id="IPR029058">
    <property type="entry name" value="AB_hydrolase_fold"/>
</dbReference>
<dbReference type="InterPro" id="IPR008220">
    <property type="entry name" value="HAT_MetX-like"/>
</dbReference>
<dbReference type="NCBIfam" id="TIGR01392">
    <property type="entry name" value="homoserO_Ac_trn"/>
    <property type="match status" value="1"/>
</dbReference>
<dbReference type="NCBIfam" id="NF001209">
    <property type="entry name" value="PRK00175.1"/>
    <property type="match status" value="1"/>
</dbReference>
<dbReference type="PANTHER" id="PTHR32268">
    <property type="entry name" value="HOMOSERINE O-ACETYLTRANSFERASE"/>
    <property type="match status" value="1"/>
</dbReference>
<dbReference type="PANTHER" id="PTHR32268:SF11">
    <property type="entry name" value="HOMOSERINE O-ACETYLTRANSFERASE"/>
    <property type="match status" value="1"/>
</dbReference>
<dbReference type="Pfam" id="PF00561">
    <property type="entry name" value="Abhydrolase_1"/>
    <property type="match status" value="1"/>
</dbReference>
<dbReference type="PIRSF" id="PIRSF000443">
    <property type="entry name" value="Homoser_Ac_trans"/>
    <property type="match status" value="1"/>
</dbReference>
<dbReference type="SUPFAM" id="SSF53474">
    <property type="entry name" value="alpha/beta-Hydrolases"/>
    <property type="match status" value="1"/>
</dbReference>
<name>METXA_MYCBP</name>
<keyword id="KW-0012">Acyltransferase</keyword>
<keyword id="KW-0028">Amino-acid biosynthesis</keyword>
<keyword id="KW-0963">Cytoplasm</keyword>
<keyword id="KW-0486">Methionine biosynthesis</keyword>
<keyword id="KW-0808">Transferase</keyword>
<accession>A1KP32</accession>
<protein>
    <recommendedName>
        <fullName evidence="1">Homoserine O-acetyltransferase</fullName>
        <shortName evidence="1">HAT</shortName>
        <ecNumber evidence="1">2.3.1.31</ecNumber>
    </recommendedName>
    <alternativeName>
        <fullName evidence="1">Homoserine transacetylase</fullName>
        <shortName evidence="1">HTA</shortName>
    </alternativeName>
</protein>